<keyword id="KW-0997">Cell inner membrane</keyword>
<keyword id="KW-1003">Cell membrane</keyword>
<keyword id="KW-0406">Ion transport</keyword>
<keyword id="KW-0472">Membrane</keyword>
<keyword id="KW-0630">Potassium</keyword>
<keyword id="KW-0633">Potassium transport</keyword>
<keyword id="KW-0812">Transmembrane</keyword>
<keyword id="KW-1133">Transmembrane helix</keyword>
<keyword id="KW-0813">Transport</keyword>
<accession>B4U8E3</accession>
<name>KDPA_HYDS0</name>
<dbReference type="EMBL" id="CP001130">
    <property type="protein sequence ID" value="ACG57404.1"/>
    <property type="molecule type" value="Genomic_DNA"/>
</dbReference>
<dbReference type="RefSeq" id="WP_012513760.1">
    <property type="nucleotide sequence ID" value="NC_011126.1"/>
</dbReference>
<dbReference type="SMR" id="B4U8E3"/>
<dbReference type="STRING" id="380749.HY04AAS1_0717"/>
<dbReference type="KEGG" id="hya:HY04AAS1_0717"/>
<dbReference type="eggNOG" id="COG2060">
    <property type="taxonomic scope" value="Bacteria"/>
</dbReference>
<dbReference type="HOGENOM" id="CLU_018614_3_0_0"/>
<dbReference type="OrthoDB" id="9763796at2"/>
<dbReference type="GO" id="GO:0005886">
    <property type="term" value="C:plasma membrane"/>
    <property type="evidence" value="ECO:0007669"/>
    <property type="project" value="UniProtKB-SubCell"/>
</dbReference>
<dbReference type="GO" id="GO:0008556">
    <property type="term" value="F:P-type potassium transmembrane transporter activity"/>
    <property type="evidence" value="ECO:0007669"/>
    <property type="project" value="InterPro"/>
</dbReference>
<dbReference type="GO" id="GO:0030955">
    <property type="term" value="F:potassium ion binding"/>
    <property type="evidence" value="ECO:0007669"/>
    <property type="project" value="UniProtKB-UniRule"/>
</dbReference>
<dbReference type="HAMAP" id="MF_00275">
    <property type="entry name" value="KdpA"/>
    <property type="match status" value="1"/>
</dbReference>
<dbReference type="InterPro" id="IPR004623">
    <property type="entry name" value="KdpA"/>
</dbReference>
<dbReference type="NCBIfam" id="TIGR00680">
    <property type="entry name" value="kdpA"/>
    <property type="match status" value="1"/>
</dbReference>
<dbReference type="PANTHER" id="PTHR30607">
    <property type="entry name" value="POTASSIUM-TRANSPORTING ATPASE A CHAIN"/>
    <property type="match status" value="1"/>
</dbReference>
<dbReference type="PANTHER" id="PTHR30607:SF2">
    <property type="entry name" value="POTASSIUM-TRANSPORTING ATPASE POTASSIUM-BINDING SUBUNIT"/>
    <property type="match status" value="1"/>
</dbReference>
<dbReference type="Pfam" id="PF03814">
    <property type="entry name" value="KdpA"/>
    <property type="match status" value="1"/>
</dbReference>
<dbReference type="PIRSF" id="PIRSF001294">
    <property type="entry name" value="K_ATPaseA"/>
    <property type="match status" value="1"/>
</dbReference>
<organism>
    <name type="scientific">Hydrogenobaculum sp. (strain Y04AAS1)</name>
    <dbReference type="NCBI Taxonomy" id="380749"/>
    <lineage>
        <taxon>Bacteria</taxon>
        <taxon>Pseudomonadati</taxon>
        <taxon>Aquificota</taxon>
        <taxon>Aquificia</taxon>
        <taxon>Aquificales</taxon>
        <taxon>Aquificaceae</taxon>
        <taxon>Hydrogenobaculum</taxon>
    </lineage>
</organism>
<protein>
    <recommendedName>
        <fullName evidence="1">Potassium-transporting ATPase potassium-binding subunit</fullName>
    </recommendedName>
    <alternativeName>
        <fullName evidence="1">ATP phosphohydrolase [potassium-transporting] A chain</fullName>
    </alternativeName>
    <alternativeName>
        <fullName evidence="1">Potassium-binding and translocating subunit A</fullName>
    </alternativeName>
    <alternativeName>
        <fullName evidence="1">Potassium-translocating ATPase A chain</fullName>
    </alternativeName>
</protein>
<reference key="1">
    <citation type="journal article" date="2009" name="J. Bacteriol.">
        <title>Complete and draft genome sequences of six members of the Aquificales.</title>
        <authorList>
            <person name="Reysenbach A.-L."/>
            <person name="Hamamura N."/>
            <person name="Podar M."/>
            <person name="Griffiths E."/>
            <person name="Ferreira S."/>
            <person name="Hochstein R."/>
            <person name="Heidelberg J."/>
            <person name="Johnson J."/>
            <person name="Mead D."/>
            <person name="Pohorille A."/>
            <person name="Sarmiento M."/>
            <person name="Schweighofer K."/>
            <person name="Seshadri R."/>
            <person name="Voytek M.A."/>
        </authorList>
    </citation>
    <scope>NUCLEOTIDE SEQUENCE [LARGE SCALE GENOMIC DNA]</scope>
    <source>
        <strain>Y04AAS1</strain>
    </source>
</reference>
<feature type="chain" id="PRO_1000190738" description="Potassium-transporting ATPase potassium-binding subunit">
    <location>
        <begin position="1"/>
        <end position="576"/>
    </location>
</feature>
<feature type="transmembrane region" description="Helical" evidence="1">
    <location>
        <begin position="3"/>
        <end position="23"/>
    </location>
</feature>
<feature type="transmembrane region" description="Helical" evidence="1">
    <location>
        <begin position="68"/>
        <end position="88"/>
    </location>
</feature>
<feature type="transmembrane region" description="Helical" evidence="1">
    <location>
        <begin position="137"/>
        <end position="157"/>
    </location>
</feature>
<feature type="transmembrane region" description="Helical" evidence="1">
    <location>
        <begin position="179"/>
        <end position="199"/>
    </location>
</feature>
<feature type="transmembrane region" description="Helical" evidence="1">
    <location>
        <begin position="267"/>
        <end position="287"/>
    </location>
</feature>
<feature type="transmembrane region" description="Helical" evidence="1">
    <location>
        <begin position="294"/>
        <end position="314"/>
    </location>
</feature>
<feature type="transmembrane region" description="Helical" evidence="1">
    <location>
        <begin position="339"/>
        <end position="359"/>
    </location>
</feature>
<feature type="transmembrane region" description="Helical" evidence="1">
    <location>
        <begin position="369"/>
        <end position="389"/>
    </location>
</feature>
<feature type="transmembrane region" description="Helical" evidence="1">
    <location>
        <begin position="391"/>
        <end position="411"/>
    </location>
</feature>
<feature type="transmembrane region" description="Helical" evidence="1">
    <location>
        <begin position="430"/>
        <end position="450"/>
    </location>
</feature>
<feature type="transmembrane region" description="Helical" evidence="1">
    <location>
        <begin position="495"/>
        <end position="515"/>
    </location>
</feature>
<feature type="transmembrane region" description="Helical" evidence="1">
    <location>
        <begin position="537"/>
        <end position="557"/>
    </location>
</feature>
<comment type="function">
    <text evidence="1">Part of the high-affinity ATP-driven potassium transport (or Kdp) system, which catalyzes the hydrolysis of ATP coupled with the electrogenic transport of potassium into the cytoplasm. This subunit binds the periplasmic potassium ions and delivers the ions to the membrane domain of KdpB through an intramembrane tunnel.</text>
</comment>
<comment type="subunit">
    <text evidence="1">The system is composed of three essential subunits: KdpA, KdpB and KdpC.</text>
</comment>
<comment type="subcellular location">
    <subcellularLocation>
        <location evidence="1">Cell inner membrane</location>
        <topology evidence="1">Multi-pass membrane protein</topology>
    </subcellularLocation>
</comment>
<comment type="similarity">
    <text evidence="1">Belongs to the KdpA family.</text>
</comment>
<sequence>MNIFLDIFSFILFFGILTIISPILGKYMADIYEGRVHPSLKPIRYVEKTIYKILGIDESKEMNWKEYLYALLSFNFLGFLVLFLTLLFQKYLPLNQYHIPNMSWDLAFNTAVSFVTNTNWQAYAGETQATYFSQITGLALQNFLSAASGIVVALVLIRAFARKNTIYLGNFYVDFTRTILYVLLPVAFFSALFLVSQGVIQNFSHYKTIELLEPYKDSKNIITTQTLPMGPVASQEAIKLLGTNGGGFFNANSAHPFENPTPLSNVFEAFLIILIPASLVFTFGYMIKDKRQGWFLYSVMLFVLMLFMGIQYYFEWFGNPIVKKLGIEGPYLIGKELRFGIGGTVLFSSITTATSCGAVNSMLDSFTPLGGLVPMSLISLGEIIFGGVGSGLYGMIAMVIIAVFVAGLMIGRTPEYLNKKIESREMWSSVVITLVSGITALLLTTLALYTKWGLSSMSNPGPHGLSEVLYAYISTSNNSGSAFAGLNANTVFYNITTGLAMLIGRFIPIIAVFYMASSLSLKKHVPPSPGTLPTHTLVFGVWLVFIIIVVGALTFLPAFSLGPILEHMLMLEGVTL</sequence>
<evidence type="ECO:0000255" key="1">
    <source>
        <dbReference type="HAMAP-Rule" id="MF_00275"/>
    </source>
</evidence>
<gene>
    <name evidence="1" type="primary">kdpA</name>
    <name type="ordered locus">HY04AAS1_0717</name>
</gene>
<proteinExistence type="inferred from homology"/>